<protein>
    <recommendedName>
        <fullName evidence="1">Aspartate carbamoyltransferase catalytic subunit</fullName>
        <ecNumber evidence="1">2.1.3.2</ecNumber>
    </recommendedName>
    <alternativeName>
        <fullName evidence="1">Aspartate transcarbamylase</fullName>
        <shortName evidence="1">ATCase</shortName>
    </alternativeName>
</protein>
<sequence>MTFRARHLLGIEHLAPDEIRSVLDLADSYVDLNRRTMKQSDALAGMTQINMFFENSTRTQSSFELAGKRLGADVMNMAVAQSSVKKGETLLDTAMTLNAMHPDLLVVRHPASGAVNLLASKVNCAVLNAGDGRHEHPTQALLDALTIRRAKGRIQRLTVAICGDIAHSRVARSNLILLGKMENRVRLIAPPTLMPPGVGEFGCELYDDMKKGLEGADVVMMLRLQKERMDGAFIPSEREYYHRFGLDAEKLAFAKEDAIVMHPGPMNRGVEIDGTLADDINRSVIQDQVEMGVAVRMACMDLLARNLRAERGRAAVGVMA</sequence>
<proteinExistence type="inferred from homology"/>
<accession>A3PN48</accession>
<evidence type="ECO:0000255" key="1">
    <source>
        <dbReference type="HAMAP-Rule" id="MF_00001"/>
    </source>
</evidence>
<keyword id="KW-0665">Pyrimidine biosynthesis</keyword>
<keyword id="KW-0808">Transferase</keyword>
<organism>
    <name type="scientific">Cereibacter sphaeroides (strain ATCC 17029 / ATH 2.4.9)</name>
    <name type="common">Rhodobacter sphaeroides</name>
    <dbReference type="NCBI Taxonomy" id="349101"/>
    <lineage>
        <taxon>Bacteria</taxon>
        <taxon>Pseudomonadati</taxon>
        <taxon>Pseudomonadota</taxon>
        <taxon>Alphaproteobacteria</taxon>
        <taxon>Rhodobacterales</taxon>
        <taxon>Paracoccaceae</taxon>
        <taxon>Cereibacter</taxon>
    </lineage>
</organism>
<comment type="function">
    <text evidence="1">Catalyzes the condensation of carbamoyl phosphate and aspartate to form carbamoyl aspartate and inorganic phosphate, the committed step in the de novo pyrimidine nucleotide biosynthesis pathway.</text>
</comment>
<comment type="catalytic activity">
    <reaction evidence="1">
        <text>carbamoyl phosphate + L-aspartate = N-carbamoyl-L-aspartate + phosphate + H(+)</text>
        <dbReference type="Rhea" id="RHEA:20013"/>
        <dbReference type="ChEBI" id="CHEBI:15378"/>
        <dbReference type="ChEBI" id="CHEBI:29991"/>
        <dbReference type="ChEBI" id="CHEBI:32814"/>
        <dbReference type="ChEBI" id="CHEBI:43474"/>
        <dbReference type="ChEBI" id="CHEBI:58228"/>
        <dbReference type="EC" id="2.1.3.2"/>
    </reaction>
</comment>
<comment type="pathway">
    <text evidence="1">Pyrimidine metabolism; UMP biosynthesis via de novo pathway; (S)-dihydroorotate from bicarbonate: step 2/3.</text>
</comment>
<comment type="subunit">
    <text evidence="1">Heterododecamer (2C3:3R2) of six catalytic PyrB chains organized as two trimers (C3), and six regulatory PyrI chains organized as three dimers (R2).</text>
</comment>
<comment type="similarity">
    <text evidence="1">Belongs to the aspartate/ornithine carbamoyltransferase superfamily. ATCase family.</text>
</comment>
<reference key="1">
    <citation type="submission" date="2007-02" db="EMBL/GenBank/DDBJ databases">
        <title>Complete sequence of chromosome 1 of Rhodobacter sphaeroides ATCC 17029.</title>
        <authorList>
            <person name="Copeland A."/>
            <person name="Lucas S."/>
            <person name="Lapidus A."/>
            <person name="Barry K."/>
            <person name="Detter J.C."/>
            <person name="Glavina del Rio T."/>
            <person name="Hammon N."/>
            <person name="Israni S."/>
            <person name="Dalin E."/>
            <person name="Tice H."/>
            <person name="Pitluck S."/>
            <person name="Kiss H."/>
            <person name="Brettin T."/>
            <person name="Bruce D."/>
            <person name="Han C."/>
            <person name="Tapia R."/>
            <person name="Gilna P."/>
            <person name="Schmutz J."/>
            <person name="Larimer F."/>
            <person name="Land M."/>
            <person name="Hauser L."/>
            <person name="Kyrpides N."/>
            <person name="Mikhailova N."/>
            <person name="Richardson P."/>
            <person name="Mackenzie C."/>
            <person name="Choudhary M."/>
            <person name="Donohue T.J."/>
            <person name="Kaplan S."/>
        </authorList>
    </citation>
    <scope>NUCLEOTIDE SEQUENCE [LARGE SCALE GENOMIC DNA]</scope>
    <source>
        <strain>ATCC 17029 / ATH 2.4.9</strain>
    </source>
</reference>
<gene>
    <name evidence="1" type="primary">pyrB</name>
    <name type="ordered locus">Rsph17029_2662</name>
</gene>
<name>PYRB_CERS1</name>
<feature type="chain" id="PRO_0000301610" description="Aspartate carbamoyltransferase catalytic subunit">
    <location>
        <begin position="1"/>
        <end position="320"/>
    </location>
</feature>
<feature type="binding site" evidence="1">
    <location>
        <position position="58"/>
    </location>
    <ligand>
        <name>carbamoyl phosphate</name>
        <dbReference type="ChEBI" id="CHEBI:58228"/>
    </ligand>
</feature>
<feature type="binding site" evidence="1">
    <location>
        <position position="59"/>
    </location>
    <ligand>
        <name>carbamoyl phosphate</name>
        <dbReference type="ChEBI" id="CHEBI:58228"/>
    </ligand>
</feature>
<feature type="binding site" evidence="1">
    <location>
        <position position="86"/>
    </location>
    <ligand>
        <name>L-aspartate</name>
        <dbReference type="ChEBI" id="CHEBI:29991"/>
    </ligand>
</feature>
<feature type="binding site" evidence="1">
    <location>
        <position position="108"/>
    </location>
    <ligand>
        <name>carbamoyl phosphate</name>
        <dbReference type="ChEBI" id="CHEBI:58228"/>
    </ligand>
</feature>
<feature type="binding site" evidence="1">
    <location>
        <position position="136"/>
    </location>
    <ligand>
        <name>carbamoyl phosphate</name>
        <dbReference type="ChEBI" id="CHEBI:58228"/>
    </ligand>
</feature>
<feature type="binding site" evidence="1">
    <location>
        <position position="139"/>
    </location>
    <ligand>
        <name>carbamoyl phosphate</name>
        <dbReference type="ChEBI" id="CHEBI:58228"/>
    </ligand>
</feature>
<feature type="binding site" evidence="1">
    <location>
        <position position="169"/>
    </location>
    <ligand>
        <name>L-aspartate</name>
        <dbReference type="ChEBI" id="CHEBI:29991"/>
    </ligand>
</feature>
<feature type="binding site" evidence="1">
    <location>
        <position position="223"/>
    </location>
    <ligand>
        <name>L-aspartate</name>
        <dbReference type="ChEBI" id="CHEBI:29991"/>
    </ligand>
</feature>
<feature type="binding site" evidence="1">
    <location>
        <position position="264"/>
    </location>
    <ligand>
        <name>carbamoyl phosphate</name>
        <dbReference type="ChEBI" id="CHEBI:58228"/>
    </ligand>
</feature>
<feature type="binding site" evidence="1">
    <location>
        <position position="265"/>
    </location>
    <ligand>
        <name>carbamoyl phosphate</name>
        <dbReference type="ChEBI" id="CHEBI:58228"/>
    </ligand>
</feature>
<dbReference type="EC" id="2.1.3.2" evidence="1"/>
<dbReference type="EMBL" id="CP000577">
    <property type="protein sequence ID" value="ABN77764.1"/>
    <property type="molecule type" value="Genomic_DNA"/>
</dbReference>
<dbReference type="RefSeq" id="WP_002721320.1">
    <property type="nucleotide sequence ID" value="NC_009049.1"/>
</dbReference>
<dbReference type="SMR" id="A3PN48"/>
<dbReference type="KEGG" id="rsh:Rsph17029_2662"/>
<dbReference type="HOGENOM" id="CLU_043846_2_0_5"/>
<dbReference type="UniPathway" id="UPA00070">
    <property type="reaction ID" value="UER00116"/>
</dbReference>
<dbReference type="GO" id="GO:0005829">
    <property type="term" value="C:cytosol"/>
    <property type="evidence" value="ECO:0007669"/>
    <property type="project" value="TreeGrafter"/>
</dbReference>
<dbReference type="GO" id="GO:0016597">
    <property type="term" value="F:amino acid binding"/>
    <property type="evidence" value="ECO:0007669"/>
    <property type="project" value="InterPro"/>
</dbReference>
<dbReference type="GO" id="GO:0004070">
    <property type="term" value="F:aspartate carbamoyltransferase activity"/>
    <property type="evidence" value="ECO:0007669"/>
    <property type="project" value="UniProtKB-UniRule"/>
</dbReference>
<dbReference type="GO" id="GO:0006207">
    <property type="term" value="P:'de novo' pyrimidine nucleobase biosynthetic process"/>
    <property type="evidence" value="ECO:0007669"/>
    <property type="project" value="InterPro"/>
</dbReference>
<dbReference type="GO" id="GO:0044205">
    <property type="term" value="P:'de novo' UMP biosynthetic process"/>
    <property type="evidence" value="ECO:0007669"/>
    <property type="project" value="UniProtKB-UniRule"/>
</dbReference>
<dbReference type="GO" id="GO:0006520">
    <property type="term" value="P:amino acid metabolic process"/>
    <property type="evidence" value="ECO:0007669"/>
    <property type="project" value="InterPro"/>
</dbReference>
<dbReference type="FunFam" id="3.40.50.1370:FF:000007">
    <property type="entry name" value="Aspartate carbamoyltransferase"/>
    <property type="match status" value="1"/>
</dbReference>
<dbReference type="Gene3D" id="3.40.50.1370">
    <property type="entry name" value="Aspartate/ornithine carbamoyltransferase"/>
    <property type="match status" value="2"/>
</dbReference>
<dbReference type="HAMAP" id="MF_00001">
    <property type="entry name" value="Asp_carb_tr"/>
    <property type="match status" value="1"/>
</dbReference>
<dbReference type="InterPro" id="IPR006132">
    <property type="entry name" value="Asp/Orn_carbamoyltranf_P-bd"/>
</dbReference>
<dbReference type="InterPro" id="IPR006130">
    <property type="entry name" value="Asp/Orn_carbamoylTrfase"/>
</dbReference>
<dbReference type="InterPro" id="IPR036901">
    <property type="entry name" value="Asp/Orn_carbamoylTrfase_sf"/>
</dbReference>
<dbReference type="InterPro" id="IPR002082">
    <property type="entry name" value="Asp_carbamoyltransf"/>
</dbReference>
<dbReference type="InterPro" id="IPR006131">
    <property type="entry name" value="Asp_carbamoyltransf_Asp/Orn-bd"/>
</dbReference>
<dbReference type="NCBIfam" id="TIGR00670">
    <property type="entry name" value="asp_carb_tr"/>
    <property type="match status" value="1"/>
</dbReference>
<dbReference type="NCBIfam" id="NF002032">
    <property type="entry name" value="PRK00856.1"/>
    <property type="match status" value="1"/>
</dbReference>
<dbReference type="PANTHER" id="PTHR45753:SF6">
    <property type="entry name" value="ASPARTATE CARBAMOYLTRANSFERASE"/>
    <property type="match status" value="1"/>
</dbReference>
<dbReference type="PANTHER" id="PTHR45753">
    <property type="entry name" value="ORNITHINE CARBAMOYLTRANSFERASE, MITOCHONDRIAL"/>
    <property type="match status" value="1"/>
</dbReference>
<dbReference type="Pfam" id="PF00185">
    <property type="entry name" value="OTCace"/>
    <property type="match status" value="1"/>
</dbReference>
<dbReference type="Pfam" id="PF02729">
    <property type="entry name" value="OTCace_N"/>
    <property type="match status" value="1"/>
</dbReference>
<dbReference type="PRINTS" id="PR00100">
    <property type="entry name" value="AOTCASE"/>
</dbReference>
<dbReference type="PRINTS" id="PR00101">
    <property type="entry name" value="ATCASE"/>
</dbReference>
<dbReference type="SUPFAM" id="SSF53671">
    <property type="entry name" value="Aspartate/ornithine carbamoyltransferase"/>
    <property type="match status" value="1"/>
</dbReference>
<dbReference type="PROSITE" id="PS00097">
    <property type="entry name" value="CARBAMOYLTRANSFERASE"/>
    <property type="match status" value="1"/>
</dbReference>